<sequence length="489" mass="57076">MILTIVIIILTVIFVNKYLLNNGGKNDLRKVQGPFNLPLLGALYAFDKERFHKSFDKFYDKYKDFYFIKFGQHDCIVLNSPKLIKQVVIEQSDSVFERFHTPSIKRYAQGKSILGCSPDEWKKLRSFIVISFSKNKMGQQVLDKIFHTQYLKFENHIKKLIKSNNNIVTLEPEFKRLTISIIFNFQFGTDLEFTDPLIDSLLVCTEKIIASCQKASDLMPIFEIFTSYKDIDGVVKEMYALVKPFLEKYLKQHDRNNPKCALDHMINCILDQDEPKLITYEHLPHFLMDMFIGGTESTARTMDWFTLMMTNRKEMQDRIRTELLDVGIRLPVLVDKQKYPLLNASIKEIHRLRPIQPIIASRVVNDPIVLKHECSAKGESYTIPVGTLIIPNAHSFNFDPQYHKDPLTFNPNRYIGDNPEILHMTFDIGIRTCPFMSFAIDELFIIFSRLFQSFEFQPIDNTPISEEAFTINSIRPKQWSCQVIERDHK</sequence>
<gene>
    <name type="primary">cyp522A1</name>
    <name type="ORF">DDB_G0282769</name>
</gene>
<keyword id="KW-0349">Heme</keyword>
<keyword id="KW-0408">Iron</keyword>
<keyword id="KW-0472">Membrane</keyword>
<keyword id="KW-0479">Metal-binding</keyword>
<keyword id="KW-0503">Monooxygenase</keyword>
<keyword id="KW-0560">Oxidoreductase</keyword>
<keyword id="KW-1185">Reference proteome</keyword>
<keyword id="KW-0812">Transmembrane</keyword>
<keyword id="KW-1133">Transmembrane helix</keyword>
<dbReference type="EC" id="1.14.-.-"/>
<dbReference type="EMBL" id="AAFI02000047">
    <property type="protein sequence ID" value="EAS66867.1"/>
    <property type="molecule type" value="Genomic_DNA"/>
</dbReference>
<dbReference type="RefSeq" id="XP_001134550.1">
    <property type="nucleotide sequence ID" value="XM_001134550.1"/>
</dbReference>
<dbReference type="SMR" id="Q1ZXG3"/>
<dbReference type="STRING" id="44689.Q1ZXG3"/>
<dbReference type="PaxDb" id="44689-DDB0233031"/>
<dbReference type="EnsemblProtists" id="EAS66867">
    <property type="protein sequence ID" value="EAS66867"/>
    <property type="gene ID" value="DDB_G0282769"/>
</dbReference>
<dbReference type="GeneID" id="8623617"/>
<dbReference type="KEGG" id="ddi:DDB_G0282769"/>
<dbReference type="dictyBase" id="DDB_G0282769">
    <property type="gene designation" value="cyp522A1"/>
</dbReference>
<dbReference type="VEuPathDB" id="AmoebaDB:DDB_G0282769"/>
<dbReference type="eggNOG" id="KOG0156">
    <property type="taxonomic scope" value="Eukaryota"/>
</dbReference>
<dbReference type="HOGENOM" id="CLU_558281_0_0_1"/>
<dbReference type="InParanoid" id="Q1ZXG3"/>
<dbReference type="OMA" id="YDSHRAT"/>
<dbReference type="PhylomeDB" id="Q1ZXG3"/>
<dbReference type="Reactome" id="R-DDI-211935">
    <property type="pathway name" value="Fatty acids"/>
</dbReference>
<dbReference type="Reactome" id="R-DDI-211945">
    <property type="pathway name" value="Phase I - Functionalization of compounds"/>
</dbReference>
<dbReference type="Reactome" id="R-DDI-211958">
    <property type="pathway name" value="Miscellaneous substrates"/>
</dbReference>
<dbReference type="Reactome" id="R-DDI-211981">
    <property type="pathway name" value="Xenobiotics"/>
</dbReference>
<dbReference type="Reactome" id="R-DDI-211999">
    <property type="pathway name" value="CYP2E1 reactions"/>
</dbReference>
<dbReference type="Reactome" id="R-DDI-2142670">
    <property type="pathway name" value="Synthesis of epoxy (EET) and dihydroxyeicosatrienoic acids (DHET)"/>
</dbReference>
<dbReference type="Reactome" id="R-DDI-2142816">
    <property type="pathway name" value="Synthesis of (16-20)-hydroxyeicosatetraenoic acids (HETE)"/>
</dbReference>
<dbReference type="Reactome" id="R-DDI-5423646">
    <property type="pathway name" value="Aflatoxin activation and detoxification"/>
</dbReference>
<dbReference type="Reactome" id="R-DDI-9027307">
    <property type="pathway name" value="Biosynthesis of maresin-like SPMs"/>
</dbReference>
<dbReference type="Reactome" id="R-DDI-9749641">
    <property type="pathway name" value="Aspirin ADME"/>
</dbReference>
<dbReference type="Reactome" id="R-DDI-9753281">
    <property type="pathway name" value="Paracetamol ADME"/>
</dbReference>
<dbReference type="PRO" id="PR:Q1ZXG3"/>
<dbReference type="Proteomes" id="UP000002195">
    <property type="component" value="Chromosome 3"/>
</dbReference>
<dbReference type="GO" id="GO:0005737">
    <property type="term" value="C:cytoplasm"/>
    <property type="evidence" value="ECO:0000318"/>
    <property type="project" value="GO_Central"/>
</dbReference>
<dbReference type="GO" id="GO:0043231">
    <property type="term" value="C:intracellular membrane-bounded organelle"/>
    <property type="evidence" value="ECO:0000318"/>
    <property type="project" value="GO_Central"/>
</dbReference>
<dbReference type="GO" id="GO:0016020">
    <property type="term" value="C:membrane"/>
    <property type="evidence" value="ECO:0007669"/>
    <property type="project" value="UniProtKB-SubCell"/>
</dbReference>
<dbReference type="GO" id="GO:0020037">
    <property type="term" value="F:heme binding"/>
    <property type="evidence" value="ECO:0000318"/>
    <property type="project" value="GO_Central"/>
</dbReference>
<dbReference type="GO" id="GO:0005506">
    <property type="term" value="F:iron ion binding"/>
    <property type="evidence" value="ECO:0007669"/>
    <property type="project" value="InterPro"/>
</dbReference>
<dbReference type="GO" id="GO:0016712">
    <property type="term" value="F:oxidoreductase activity, acting on paired donors, with incorporation or reduction of molecular oxygen, reduced flavin or flavoprotein as one donor, and incorporation of one atom of oxygen"/>
    <property type="evidence" value="ECO:0000318"/>
    <property type="project" value="GO_Central"/>
</dbReference>
<dbReference type="GO" id="GO:0006082">
    <property type="term" value="P:organic acid metabolic process"/>
    <property type="evidence" value="ECO:0000318"/>
    <property type="project" value="GO_Central"/>
</dbReference>
<dbReference type="GO" id="GO:0006805">
    <property type="term" value="P:xenobiotic metabolic process"/>
    <property type="evidence" value="ECO:0000318"/>
    <property type="project" value="GO_Central"/>
</dbReference>
<dbReference type="CDD" id="cd20617">
    <property type="entry name" value="CYP1_2-like"/>
    <property type="match status" value="1"/>
</dbReference>
<dbReference type="FunFam" id="1.10.630.10:FF:000473">
    <property type="entry name" value="Probable cytochrome P450 522A1"/>
    <property type="match status" value="1"/>
</dbReference>
<dbReference type="Gene3D" id="1.10.630.10">
    <property type="entry name" value="Cytochrome P450"/>
    <property type="match status" value="1"/>
</dbReference>
<dbReference type="InterPro" id="IPR001128">
    <property type="entry name" value="Cyt_P450"/>
</dbReference>
<dbReference type="InterPro" id="IPR002401">
    <property type="entry name" value="Cyt_P450_E_grp-I"/>
</dbReference>
<dbReference type="InterPro" id="IPR036396">
    <property type="entry name" value="Cyt_P450_sf"/>
</dbReference>
<dbReference type="InterPro" id="IPR050182">
    <property type="entry name" value="Cytochrome_P450_fam2"/>
</dbReference>
<dbReference type="PANTHER" id="PTHR24300">
    <property type="entry name" value="CYTOCHROME P450 508A4-RELATED"/>
    <property type="match status" value="1"/>
</dbReference>
<dbReference type="PANTHER" id="PTHR24300:SF375">
    <property type="entry name" value="CYTOCHROME P450 FAMILY"/>
    <property type="match status" value="1"/>
</dbReference>
<dbReference type="Pfam" id="PF00067">
    <property type="entry name" value="p450"/>
    <property type="match status" value="1"/>
</dbReference>
<dbReference type="PRINTS" id="PR00463">
    <property type="entry name" value="EP450I"/>
</dbReference>
<dbReference type="PRINTS" id="PR00385">
    <property type="entry name" value="P450"/>
</dbReference>
<dbReference type="SUPFAM" id="SSF48264">
    <property type="entry name" value="Cytochrome P450"/>
    <property type="match status" value="1"/>
</dbReference>
<protein>
    <recommendedName>
        <fullName>Probable cytochrome P450 522A1</fullName>
        <ecNumber>1.14.-.-</ecNumber>
    </recommendedName>
</protein>
<name>C522A_DICDI</name>
<accession>Q1ZXG3</accession>
<organism>
    <name type="scientific">Dictyostelium discoideum</name>
    <name type="common">Social amoeba</name>
    <dbReference type="NCBI Taxonomy" id="44689"/>
    <lineage>
        <taxon>Eukaryota</taxon>
        <taxon>Amoebozoa</taxon>
        <taxon>Evosea</taxon>
        <taxon>Eumycetozoa</taxon>
        <taxon>Dictyostelia</taxon>
        <taxon>Dictyosteliales</taxon>
        <taxon>Dictyosteliaceae</taxon>
        <taxon>Dictyostelium</taxon>
    </lineage>
</organism>
<comment type="cofactor">
    <cofactor evidence="1">
        <name>heme</name>
        <dbReference type="ChEBI" id="CHEBI:30413"/>
    </cofactor>
</comment>
<comment type="subcellular location">
    <subcellularLocation>
        <location evidence="3">Membrane</location>
        <topology evidence="3">Single-pass membrane protein</topology>
    </subcellularLocation>
</comment>
<comment type="similarity">
    <text evidence="3">Belongs to the cytochrome P450 family.</text>
</comment>
<evidence type="ECO:0000250" key="1"/>
<evidence type="ECO:0000255" key="2"/>
<evidence type="ECO:0000305" key="3"/>
<reference key="1">
    <citation type="journal article" date="2005" name="Nature">
        <title>The genome of the social amoeba Dictyostelium discoideum.</title>
        <authorList>
            <person name="Eichinger L."/>
            <person name="Pachebat J.A."/>
            <person name="Gloeckner G."/>
            <person name="Rajandream M.A."/>
            <person name="Sucgang R."/>
            <person name="Berriman M."/>
            <person name="Song J."/>
            <person name="Olsen R."/>
            <person name="Szafranski K."/>
            <person name="Xu Q."/>
            <person name="Tunggal B."/>
            <person name="Kummerfeld S."/>
            <person name="Madera M."/>
            <person name="Konfortov B.A."/>
            <person name="Rivero F."/>
            <person name="Bankier A.T."/>
            <person name="Lehmann R."/>
            <person name="Hamlin N."/>
            <person name="Davies R."/>
            <person name="Gaudet P."/>
            <person name="Fey P."/>
            <person name="Pilcher K."/>
            <person name="Chen G."/>
            <person name="Saunders D."/>
            <person name="Sodergren E.J."/>
            <person name="Davis P."/>
            <person name="Kerhornou A."/>
            <person name="Nie X."/>
            <person name="Hall N."/>
            <person name="Anjard C."/>
            <person name="Hemphill L."/>
            <person name="Bason N."/>
            <person name="Farbrother P."/>
            <person name="Desany B."/>
            <person name="Just E."/>
            <person name="Morio T."/>
            <person name="Rost R."/>
            <person name="Churcher C.M."/>
            <person name="Cooper J."/>
            <person name="Haydock S."/>
            <person name="van Driessche N."/>
            <person name="Cronin A."/>
            <person name="Goodhead I."/>
            <person name="Muzny D.M."/>
            <person name="Mourier T."/>
            <person name="Pain A."/>
            <person name="Lu M."/>
            <person name="Harper D."/>
            <person name="Lindsay R."/>
            <person name="Hauser H."/>
            <person name="James K.D."/>
            <person name="Quiles M."/>
            <person name="Madan Babu M."/>
            <person name="Saito T."/>
            <person name="Buchrieser C."/>
            <person name="Wardroper A."/>
            <person name="Felder M."/>
            <person name="Thangavelu M."/>
            <person name="Johnson D."/>
            <person name="Knights A."/>
            <person name="Loulseged H."/>
            <person name="Mungall K.L."/>
            <person name="Oliver K."/>
            <person name="Price C."/>
            <person name="Quail M.A."/>
            <person name="Urushihara H."/>
            <person name="Hernandez J."/>
            <person name="Rabbinowitsch E."/>
            <person name="Steffen D."/>
            <person name="Sanders M."/>
            <person name="Ma J."/>
            <person name="Kohara Y."/>
            <person name="Sharp S."/>
            <person name="Simmonds M.N."/>
            <person name="Spiegler S."/>
            <person name="Tivey A."/>
            <person name="Sugano S."/>
            <person name="White B."/>
            <person name="Walker D."/>
            <person name="Woodward J.R."/>
            <person name="Winckler T."/>
            <person name="Tanaka Y."/>
            <person name="Shaulsky G."/>
            <person name="Schleicher M."/>
            <person name="Weinstock G.M."/>
            <person name="Rosenthal A."/>
            <person name="Cox E.C."/>
            <person name="Chisholm R.L."/>
            <person name="Gibbs R.A."/>
            <person name="Loomis W.F."/>
            <person name="Platzer M."/>
            <person name="Kay R.R."/>
            <person name="Williams J.G."/>
            <person name="Dear P.H."/>
            <person name="Noegel A.A."/>
            <person name="Barrell B.G."/>
            <person name="Kuspa A."/>
        </authorList>
    </citation>
    <scope>NUCLEOTIDE SEQUENCE [LARGE SCALE GENOMIC DNA]</scope>
    <source>
        <strain>AX4</strain>
    </source>
</reference>
<proteinExistence type="inferred from homology"/>
<feature type="chain" id="PRO_0000318840" description="Probable cytochrome P450 522A1">
    <location>
        <begin position="1"/>
        <end position="489"/>
    </location>
</feature>
<feature type="transmembrane region" description="Helical" evidence="2">
    <location>
        <begin position="1"/>
        <end position="21"/>
    </location>
</feature>
<feature type="binding site" description="axial binding residue" evidence="1">
    <location>
        <position position="433"/>
    </location>
    <ligand>
        <name>heme</name>
        <dbReference type="ChEBI" id="CHEBI:30413"/>
    </ligand>
    <ligandPart>
        <name>Fe</name>
        <dbReference type="ChEBI" id="CHEBI:18248"/>
    </ligandPart>
</feature>